<proteinExistence type="evidence at transcript level"/>
<dbReference type="EC" id="2.3.2.27"/>
<dbReference type="EMBL" id="AH014830">
    <property type="protein sequence ID" value="AAX86679.1"/>
    <property type="molecule type" value="Genomic_DNA"/>
</dbReference>
<dbReference type="EMBL" id="AY740617">
    <property type="protein sequence ID" value="AAW72445.1"/>
    <property type="molecule type" value="mRNA"/>
</dbReference>
<dbReference type="EMBL" id="AY843506">
    <property type="protein sequence ID" value="AAV91977.1"/>
    <property type="molecule type" value="Genomic_DNA"/>
</dbReference>
<dbReference type="EMBL" id="DQ298177">
    <property type="protein sequence ID" value="ABC25560.1"/>
    <property type="molecule type" value="Genomic_DNA"/>
</dbReference>
<dbReference type="EMBL" id="AY923177">
    <property type="protein sequence ID" value="AAY23159.1"/>
    <property type="molecule type" value="Genomic_DNA"/>
</dbReference>
<dbReference type="EMBL" id="DQ437595">
    <property type="protein sequence ID" value="ABE28397.1"/>
    <property type="molecule type" value="Genomic_DNA"/>
</dbReference>
<dbReference type="RefSeq" id="NP_001012668.1">
    <property type="nucleotide sequence ID" value="NM_001012650.1"/>
</dbReference>
<dbReference type="RefSeq" id="XP_016775377.1">
    <property type="nucleotide sequence ID" value="XM_016919888.4"/>
</dbReference>
<dbReference type="RefSeq" id="XP_016775378.1">
    <property type="nucleotide sequence ID" value="XM_016919889.4"/>
</dbReference>
<dbReference type="RefSeq" id="XP_016775379.1">
    <property type="nucleotide sequence ID" value="XM_016919890.1"/>
</dbReference>
<dbReference type="RefSeq" id="XP_016775380.1">
    <property type="nucleotide sequence ID" value="XM_016919891.4"/>
</dbReference>
<dbReference type="BMRB" id="Q5D7J1"/>
<dbReference type="SMR" id="Q5D7J1"/>
<dbReference type="FunCoup" id="Q5D7J1">
    <property type="interactions" value="201"/>
</dbReference>
<dbReference type="STRING" id="9598.ENSPTRP00000005730"/>
<dbReference type="PaxDb" id="9598-ENSPTRP00000005730"/>
<dbReference type="Ensembl" id="ENSPTRT00000006209.6">
    <property type="protein sequence ID" value="ENSPTRP00000005730.6"/>
    <property type="gene ID" value="ENSPTRG00000003258.7"/>
</dbReference>
<dbReference type="GeneID" id="503563"/>
<dbReference type="KEGG" id="ptr:503563"/>
<dbReference type="CTD" id="85363"/>
<dbReference type="VGNC" id="VGNC:53180">
    <property type="gene designation" value="TRIM5"/>
</dbReference>
<dbReference type="eggNOG" id="KOG2177">
    <property type="taxonomic scope" value="Eukaryota"/>
</dbReference>
<dbReference type="GeneTree" id="ENSGT00940000154647"/>
<dbReference type="InParanoid" id="Q5D7J1"/>
<dbReference type="OMA" id="CITANNR"/>
<dbReference type="UniPathway" id="UPA00143"/>
<dbReference type="Proteomes" id="UP000002277">
    <property type="component" value="Chromosome 11"/>
</dbReference>
<dbReference type="Bgee" id="ENSPTRG00000003258">
    <property type="expression patterns" value="Expressed in fibroblast and 22 other cell types or tissues"/>
</dbReference>
<dbReference type="GO" id="GO:0005737">
    <property type="term" value="C:cytoplasm"/>
    <property type="evidence" value="ECO:0000318"/>
    <property type="project" value="GO_Central"/>
</dbReference>
<dbReference type="GO" id="GO:0005634">
    <property type="term" value="C:nucleus"/>
    <property type="evidence" value="ECO:0007669"/>
    <property type="project" value="UniProtKB-SubCell"/>
</dbReference>
<dbReference type="GO" id="GO:1990462">
    <property type="term" value="C:omegasome"/>
    <property type="evidence" value="ECO:0007669"/>
    <property type="project" value="Ensembl"/>
</dbReference>
<dbReference type="GO" id="GO:0000932">
    <property type="term" value="C:P-body"/>
    <property type="evidence" value="ECO:0000250"/>
    <property type="project" value="UniProtKB"/>
</dbReference>
<dbReference type="GO" id="GO:0038187">
    <property type="term" value="F:pattern recognition receptor activity"/>
    <property type="evidence" value="ECO:0000250"/>
    <property type="project" value="UniProtKB"/>
</dbReference>
<dbReference type="GO" id="GO:0042803">
    <property type="term" value="F:protein homodimerization activity"/>
    <property type="evidence" value="ECO:0000318"/>
    <property type="project" value="GO_Central"/>
</dbReference>
<dbReference type="GO" id="GO:0019901">
    <property type="term" value="F:protein kinase binding"/>
    <property type="evidence" value="ECO:0000318"/>
    <property type="project" value="GO_Central"/>
</dbReference>
<dbReference type="GO" id="GO:0003713">
    <property type="term" value="F:transcription coactivator activity"/>
    <property type="evidence" value="ECO:0007669"/>
    <property type="project" value="Ensembl"/>
</dbReference>
<dbReference type="GO" id="GO:0061630">
    <property type="term" value="F:ubiquitin protein ligase activity"/>
    <property type="evidence" value="ECO:0000318"/>
    <property type="project" value="GO_Central"/>
</dbReference>
<dbReference type="GO" id="GO:0004842">
    <property type="term" value="F:ubiquitin-protein transferase activity"/>
    <property type="evidence" value="ECO:0000250"/>
    <property type="project" value="UniProtKB"/>
</dbReference>
<dbReference type="GO" id="GO:0008270">
    <property type="term" value="F:zinc ion binding"/>
    <property type="evidence" value="ECO:0007669"/>
    <property type="project" value="UniProtKB-KW"/>
</dbReference>
<dbReference type="GO" id="GO:0002218">
    <property type="term" value="P:activation of innate immune response"/>
    <property type="evidence" value="ECO:0000250"/>
    <property type="project" value="UniProtKB"/>
</dbReference>
<dbReference type="GO" id="GO:0006914">
    <property type="term" value="P:autophagy"/>
    <property type="evidence" value="ECO:0007669"/>
    <property type="project" value="UniProtKB-KW"/>
</dbReference>
<dbReference type="GO" id="GO:0046597">
    <property type="term" value="P:host-mediated suppression of symbiont invasion"/>
    <property type="evidence" value="ECO:0007669"/>
    <property type="project" value="Ensembl"/>
</dbReference>
<dbReference type="GO" id="GO:0045087">
    <property type="term" value="P:innate immune response"/>
    <property type="evidence" value="ECO:0000318"/>
    <property type="project" value="GO_Central"/>
</dbReference>
<dbReference type="GO" id="GO:0043123">
    <property type="term" value="P:positive regulation of canonical NF-kappaB signal transduction"/>
    <property type="evidence" value="ECO:0000250"/>
    <property type="project" value="UniProtKB"/>
</dbReference>
<dbReference type="GO" id="GO:0043410">
    <property type="term" value="P:positive regulation of MAPK cascade"/>
    <property type="evidence" value="ECO:0000250"/>
    <property type="project" value="UniProtKB"/>
</dbReference>
<dbReference type="GO" id="GO:0051092">
    <property type="term" value="P:positive regulation of NF-kappaB transcription factor activity"/>
    <property type="evidence" value="ECO:0000250"/>
    <property type="project" value="UniProtKB"/>
</dbReference>
<dbReference type="GO" id="GO:0070534">
    <property type="term" value="P:protein K63-linked ubiquitination"/>
    <property type="evidence" value="ECO:0000250"/>
    <property type="project" value="UniProtKB"/>
</dbReference>
<dbReference type="GO" id="GO:0010468">
    <property type="term" value="P:regulation of gene expression"/>
    <property type="evidence" value="ECO:0000318"/>
    <property type="project" value="GO_Central"/>
</dbReference>
<dbReference type="GO" id="GO:0031664">
    <property type="term" value="P:regulation of lipopolysaccharide-mediated signaling pathway"/>
    <property type="evidence" value="ECO:0000250"/>
    <property type="project" value="UniProtKB"/>
</dbReference>
<dbReference type="GO" id="GO:0032880">
    <property type="term" value="P:regulation of protein localization"/>
    <property type="evidence" value="ECO:0000318"/>
    <property type="project" value="GO_Central"/>
</dbReference>
<dbReference type="GO" id="GO:0046596">
    <property type="term" value="P:regulation of viral entry into host cell"/>
    <property type="evidence" value="ECO:0000318"/>
    <property type="project" value="GO_Central"/>
</dbReference>
<dbReference type="GO" id="GO:0044790">
    <property type="term" value="P:suppression of viral release by host"/>
    <property type="evidence" value="ECO:0007669"/>
    <property type="project" value="Ensembl"/>
</dbReference>
<dbReference type="CDD" id="cd19761">
    <property type="entry name" value="Bbox2_TRIM5-like"/>
    <property type="match status" value="1"/>
</dbReference>
<dbReference type="CDD" id="cd16591">
    <property type="entry name" value="RING-HC_TRIM5-like_C-IV"/>
    <property type="match status" value="1"/>
</dbReference>
<dbReference type="CDD" id="cd15822">
    <property type="entry name" value="SPRY_PRY_TRIM5"/>
    <property type="match status" value="1"/>
</dbReference>
<dbReference type="FunFam" id="2.60.120.920:FF:000023">
    <property type="entry name" value="Tripartite motif-containing 5 (Predicted)"/>
    <property type="match status" value="1"/>
</dbReference>
<dbReference type="FunFam" id="3.30.160.60:FF:000386">
    <property type="entry name" value="Tripartite motif-containing 5 (Predicted)"/>
    <property type="match status" value="1"/>
</dbReference>
<dbReference type="FunFam" id="3.30.40.10:FF:000144">
    <property type="entry name" value="Tripartite motif-containing 5 (Predicted)"/>
    <property type="match status" value="1"/>
</dbReference>
<dbReference type="Gene3D" id="2.60.120.920">
    <property type="match status" value="1"/>
</dbReference>
<dbReference type="Gene3D" id="3.30.160.60">
    <property type="entry name" value="Classic Zinc Finger"/>
    <property type="match status" value="1"/>
</dbReference>
<dbReference type="Gene3D" id="3.30.40.10">
    <property type="entry name" value="Zinc/RING finger domain, C3HC4 (zinc finger)"/>
    <property type="match status" value="1"/>
</dbReference>
<dbReference type="InterPro" id="IPR001870">
    <property type="entry name" value="B30.2/SPRY"/>
</dbReference>
<dbReference type="InterPro" id="IPR043136">
    <property type="entry name" value="B30.2/SPRY_sf"/>
</dbReference>
<dbReference type="InterPro" id="IPR003879">
    <property type="entry name" value="Butyrophylin_SPRY"/>
</dbReference>
<dbReference type="InterPro" id="IPR013320">
    <property type="entry name" value="ConA-like_dom_sf"/>
</dbReference>
<dbReference type="InterPro" id="IPR003877">
    <property type="entry name" value="SPRY_dom"/>
</dbReference>
<dbReference type="InterPro" id="IPR050143">
    <property type="entry name" value="TRIM/RBCC"/>
</dbReference>
<dbReference type="InterPro" id="IPR027370">
    <property type="entry name" value="Znf-RING_euk"/>
</dbReference>
<dbReference type="InterPro" id="IPR000315">
    <property type="entry name" value="Znf_B-box"/>
</dbReference>
<dbReference type="InterPro" id="IPR001841">
    <property type="entry name" value="Znf_RING"/>
</dbReference>
<dbReference type="InterPro" id="IPR013083">
    <property type="entry name" value="Znf_RING/FYVE/PHD"/>
</dbReference>
<dbReference type="InterPro" id="IPR017907">
    <property type="entry name" value="Znf_RING_CS"/>
</dbReference>
<dbReference type="PANTHER" id="PTHR24103">
    <property type="entry name" value="E3 UBIQUITIN-PROTEIN LIGASE TRIM"/>
    <property type="match status" value="1"/>
</dbReference>
<dbReference type="Pfam" id="PF00622">
    <property type="entry name" value="SPRY"/>
    <property type="match status" value="1"/>
</dbReference>
<dbReference type="Pfam" id="PF00643">
    <property type="entry name" value="zf-B_box"/>
    <property type="match status" value="1"/>
</dbReference>
<dbReference type="Pfam" id="PF13445">
    <property type="entry name" value="zf-RING_UBOX"/>
    <property type="match status" value="1"/>
</dbReference>
<dbReference type="PRINTS" id="PR01407">
    <property type="entry name" value="BUTYPHLNCDUF"/>
</dbReference>
<dbReference type="SMART" id="SM00336">
    <property type="entry name" value="BBOX"/>
    <property type="match status" value="1"/>
</dbReference>
<dbReference type="SMART" id="SM00184">
    <property type="entry name" value="RING"/>
    <property type="match status" value="1"/>
</dbReference>
<dbReference type="SMART" id="SM00449">
    <property type="entry name" value="SPRY"/>
    <property type="match status" value="1"/>
</dbReference>
<dbReference type="SUPFAM" id="SSF57845">
    <property type="entry name" value="B-box zinc-binding domain"/>
    <property type="match status" value="1"/>
</dbReference>
<dbReference type="SUPFAM" id="SSF49899">
    <property type="entry name" value="Concanavalin A-like lectins/glucanases"/>
    <property type="match status" value="1"/>
</dbReference>
<dbReference type="SUPFAM" id="SSF57850">
    <property type="entry name" value="RING/U-box"/>
    <property type="match status" value="1"/>
</dbReference>
<dbReference type="PROSITE" id="PS50188">
    <property type="entry name" value="B302_SPRY"/>
    <property type="match status" value="1"/>
</dbReference>
<dbReference type="PROSITE" id="PS50119">
    <property type="entry name" value="ZF_BBOX"/>
    <property type="match status" value="1"/>
</dbReference>
<dbReference type="PROSITE" id="PS00518">
    <property type="entry name" value="ZF_RING_1"/>
    <property type="match status" value="1"/>
</dbReference>
<dbReference type="PROSITE" id="PS50089">
    <property type="entry name" value="ZF_RING_2"/>
    <property type="match status" value="1"/>
</dbReference>
<sequence length="493" mass="56271">MASGILVNVKEEVTCPICLELLTQPLSLDCGHSFCQACLTANHKKSMLDKGESSCPVCRISYQPENIRPNRHVANIVEKLREVKLSPEGQKVDHCAHHGEKLLLFCQEDGKVICWLCERSQEHRGHHTFLTEEVAREYQVKLQAALEMLRQKQQEAEELEADIREEKASWKTQIQYDKTNVLADFEQLRDILDWEESNELQNLEKEEEDILKSLTKSETEMVQQTQSVRELISDLERRLQGSVMELLQGVDGVIKRMENVTLKKPETFPKNQRRVFRAPDLKGMLEVFRELTDVRRYWVDVTVAPNNISCAVISEDMRQVSSPKPQIIYGARGTRYQTFMNFNYCTGILGSQSITSGKHYWEVDVSKKSAWILGVCAGFQPDAMCNIEKNENYQPKYGYWVIGLEEGVKCSAFQDGSFHTPSAPFIVPLSVIICPDRVGVFLDYEACTVSFFNITNHGSLIYKFSHCSFSQPVFPYLNPRKCGVPMTLCSPSS</sequence>
<organism>
    <name type="scientific">Pan troglodytes</name>
    <name type="common">Chimpanzee</name>
    <dbReference type="NCBI Taxonomy" id="9598"/>
    <lineage>
        <taxon>Eukaryota</taxon>
        <taxon>Metazoa</taxon>
        <taxon>Chordata</taxon>
        <taxon>Craniata</taxon>
        <taxon>Vertebrata</taxon>
        <taxon>Euteleostomi</taxon>
        <taxon>Mammalia</taxon>
        <taxon>Eutheria</taxon>
        <taxon>Euarchontoglires</taxon>
        <taxon>Primates</taxon>
        <taxon>Haplorrhini</taxon>
        <taxon>Catarrhini</taxon>
        <taxon>Hominidae</taxon>
        <taxon>Pan</taxon>
    </lineage>
</organism>
<evidence type="ECO:0000250" key="1"/>
<evidence type="ECO:0000250" key="2">
    <source>
        <dbReference type="UniProtKB" id="Q0PF16"/>
    </source>
</evidence>
<evidence type="ECO:0000250" key="3">
    <source>
        <dbReference type="UniProtKB" id="Q9C035"/>
    </source>
</evidence>
<evidence type="ECO:0000255" key="4"/>
<evidence type="ECO:0000255" key="5">
    <source>
        <dbReference type="PROSITE-ProRule" id="PRU00024"/>
    </source>
</evidence>
<evidence type="ECO:0000255" key="6">
    <source>
        <dbReference type="PROSITE-ProRule" id="PRU00175"/>
    </source>
</evidence>
<evidence type="ECO:0000255" key="7">
    <source>
        <dbReference type="PROSITE-ProRule" id="PRU00548"/>
    </source>
</evidence>
<evidence type="ECO:0000305" key="8"/>
<feature type="initiator methionine" description="Removed" evidence="3">
    <location>
        <position position="1"/>
    </location>
</feature>
<feature type="chain" id="PRO_0000273468" description="Tripartite motif-containing protein 5">
    <location>
        <begin position="2"/>
        <end position="493"/>
    </location>
</feature>
<feature type="domain" description="B30.2/SPRY" evidence="7">
    <location>
        <begin position="281"/>
        <end position="493"/>
    </location>
</feature>
<feature type="zinc finger region" description="RING-type" evidence="6">
    <location>
        <begin position="15"/>
        <end position="59"/>
    </location>
</feature>
<feature type="zinc finger region" description="B box-type" evidence="5">
    <location>
        <begin position="90"/>
        <end position="132"/>
    </location>
</feature>
<feature type="region of interest" description="Required for interaction with GABARAP and for autophagy" evidence="2">
    <location>
        <begin position="185"/>
        <end position="198"/>
    </location>
</feature>
<feature type="coiled-coil region" evidence="4">
    <location>
        <begin position="131"/>
        <end position="240"/>
    </location>
</feature>
<feature type="binding site" evidence="5">
    <location>
        <position position="95"/>
    </location>
    <ligand>
        <name>Zn(2+)</name>
        <dbReference type="ChEBI" id="CHEBI:29105"/>
    </ligand>
</feature>
<feature type="binding site" evidence="5">
    <location>
        <position position="98"/>
    </location>
    <ligand>
        <name>Zn(2+)</name>
        <dbReference type="ChEBI" id="CHEBI:29105"/>
    </ligand>
</feature>
<feature type="binding site" evidence="5">
    <location>
        <position position="117"/>
    </location>
    <ligand>
        <name>Zn(2+)</name>
        <dbReference type="ChEBI" id="CHEBI:29105"/>
    </ligand>
</feature>
<feature type="binding site" evidence="5">
    <location>
        <position position="123"/>
    </location>
    <ligand>
        <name>Zn(2+)</name>
        <dbReference type="ChEBI" id="CHEBI:29105"/>
    </ligand>
</feature>
<feature type="modified residue" description="N-acetylalanine" evidence="3">
    <location>
        <position position="2"/>
    </location>
</feature>
<feature type="modified residue" description="Phosphoserine" evidence="3">
    <location>
        <position position="86"/>
    </location>
</feature>
<feature type="sequence conflict" description="In Ref. 2; AAW72445." evidence="8" ref="2">
    <original>V</original>
    <variation>A</variation>
    <location>
        <position position="73"/>
    </location>
</feature>
<feature type="sequence conflict" description="In Ref. 5; AAY23159." evidence="8" ref="5">
    <original>H</original>
    <variation>R</variation>
    <location>
        <position position="97"/>
    </location>
</feature>
<feature type="sequence conflict" description="In Ref. 5; AAY23159." evidence="8" ref="5">
    <original>S</original>
    <variation>F</variation>
    <location>
        <position position="459"/>
    </location>
</feature>
<comment type="function">
    <text evidence="3">Capsid-specific restriction factor that prevents infection from non-host-adapted retroviruses. Blocks viral replication early in the life cycle, after viral entry but before reverse transcription. In addition to acting as a capsid-specific restriction factor, also acts as a pattern recognition receptor that activates innate immune signaling in response to the retroviral capsid lattice. Binding to the viral capsid triggers its E3 ubiquitin ligase activity, and in concert with the heterodimeric ubiquitin conjugating enzyme complex UBE2V1-UBE2N (also known as UBC13-UEV1A complex) generates 'Lys-63'-linked polyubiquitin chains, which in turn are catalysts in the autophosphorylation of the MAP3K7/TAK1 complex (includes TAK1, TAB2, and TAB3). Activation of the MAP3K7/TAK1 complex by autophosphorylation results in the induction and expression of NF-kappa-B and MAPK-responsive inflammatory genes, thereby leading to an innate immune response in the infected cell. Plays a role in regulating autophagy through activation of autophagy regulator BECN1 by causing its dissociation from its inhibitors BCL2 and TAB2.</text>
</comment>
<comment type="catalytic activity">
    <reaction>
        <text>S-ubiquitinyl-[E2 ubiquitin-conjugating enzyme]-L-cysteine + [acceptor protein]-L-lysine = [E2 ubiquitin-conjugating enzyme]-L-cysteine + N(6)-ubiquitinyl-[acceptor protein]-L-lysine.</text>
        <dbReference type="EC" id="2.3.2.27"/>
    </reaction>
</comment>
<comment type="pathway">
    <text>Protein modification; protein ubiquitination.</text>
</comment>
<comment type="subunit">
    <text evidence="2 3">Can form homodimers and homotrimers. In addition to lower-order dimerization, also exhibits a higher-order multimerization and both low- and high-order multimerizations are essential for its restriction activity. Interacts with BTBD1 and BTBD2. Interacts with PSMC4, PSMC5, PSMD7 and HSPA8/HSC70. Interacts (via B30.2/SPRY domain) with HSPA1A/B. Interacts with PSMC2, MAP3K7/TAK1, TAB2 and TAB3. Interacts with SQSTM1. Interacts with TRIM6 and TRIM34. Interacts with ULK1 (phosphorylated form), GABARAP, GABARAPL1, GABARAPL2, MAP1LC3A, MAP1LC3C and BECN1.</text>
</comment>
<comment type="subcellular location">
    <subcellularLocation>
        <location evidence="2">Cytoplasm</location>
    </subcellularLocation>
    <subcellularLocation>
        <location evidence="2">Nucleus</location>
    </subcellularLocation>
    <text evidence="2">Predominantly localizes in cytoplasmic bodies. Localization may be influenced by the coexpression of other TRIM proteins, hence partial nuclear localization is observed in the presence of TRIM22 or TRIM27. In cytoplasmic bodies, colocalizes with proteasomal subunits and SQSTM1.</text>
</comment>
<comment type="domain">
    <text evidence="2 3">The B box-type zinc finger domain and the coiled-coil domain contribute to the higher and low order multimerization respectively which is essential for restriction activity. The coiled coil domain is important for higher order multimerization by promoting the initial dimerization.</text>
</comment>
<comment type="domain">
    <text evidence="1">The B30.2/SPRY domain acts as a capsid recognition domain. Polymorphisms in this domain explain the observed species-specific differences among orthologs (By similarity).</text>
</comment>
<comment type="domain">
    <text evidence="1">The RING-type zinc finger domain confers E3 ubiquitin ligase activity and is essential for retrovirus restriction activity, autoubiquitination and higher-order multimerization.</text>
</comment>
<comment type="PTM">
    <text evidence="1">Degraded in a proteasome-independent fashion in the absence of viral infection but in a proteasome-dependent fashion following exposure to restriction sensitive virus.</text>
</comment>
<comment type="PTM">
    <text evidence="1">Autoubiquitinated in a RING finger- and UBE2D2-dependent manner. Monoubiquitinated by TRIM21. Deubiquitinated by Yersinia YopJ. Ubiquitination may not lead to proteasomal degradation (By similarity).</text>
</comment>
<comment type="similarity">
    <text evidence="8">Belongs to the TRIM/RBCC family.</text>
</comment>
<gene>
    <name type="primary">TRIM5</name>
</gene>
<keyword id="KW-0007">Acetylation</keyword>
<keyword id="KW-0051">Antiviral defense</keyword>
<keyword id="KW-0072">Autophagy</keyword>
<keyword id="KW-0175">Coiled coil</keyword>
<keyword id="KW-0963">Cytoplasm</keyword>
<keyword id="KW-0391">Immunity</keyword>
<keyword id="KW-0399">Innate immunity</keyword>
<keyword id="KW-0479">Metal-binding</keyword>
<keyword id="KW-0539">Nucleus</keyword>
<keyword id="KW-0597">Phosphoprotein</keyword>
<keyword id="KW-1185">Reference proteome</keyword>
<keyword id="KW-0808">Transferase</keyword>
<keyword id="KW-0832">Ubl conjugation</keyword>
<keyword id="KW-0833">Ubl conjugation pathway</keyword>
<keyword id="KW-0862">Zinc</keyword>
<keyword id="KW-0863">Zinc-finger</keyword>
<name>TRIM5_PANTR</name>
<accession>Q5D7J1</accession>
<accession>Q0NNY5</accession>
<accession>Q3ZEE8</accession>
<accession>Q5C8T9</accession>
<protein>
    <recommendedName>
        <fullName>Tripartite motif-containing protein 5</fullName>
        <ecNumber>2.3.2.27</ecNumber>
    </recommendedName>
    <alternativeName>
        <fullName evidence="8">RING-type E3 ubiquitin transferase TRIM5</fullName>
    </alternativeName>
    <alternativeName>
        <fullName>TRIM5alpha</fullName>
    </alternativeName>
</protein>
<reference key="1">
    <citation type="journal article" date="2005" name="Gene">
        <title>Adaptive evolution of primate TRIM5alpha, a gene restricting HIV-1 infection.</title>
        <authorList>
            <person name="Liu H.L."/>
            <person name="Wang Y.Q."/>
            <person name="Liao C.H."/>
            <person name="Kuang Y.Q."/>
            <person name="Zheng Y.T."/>
            <person name="Su B."/>
        </authorList>
    </citation>
    <scope>NUCLEOTIDE SEQUENCE [GENOMIC DNA]</scope>
</reference>
<reference key="2">
    <citation type="journal article" date="2005" name="J. Virol.">
        <title>The B30.2(SPRY) domain of the retroviral restriction factor TRIM5alpha exhibits lineage-specific length and sequence variation in primates.</title>
        <authorList>
            <person name="Song B."/>
            <person name="Gold B."/>
            <person name="O'Huigin C."/>
            <person name="Javanbakht H."/>
            <person name="Li X."/>
            <person name="Stremlau M."/>
            <person name="Winkler C."/>
            <person name="Dean M."/>
            <person name="Sodroski J."/>
        </authorList>
    </citation>
    <scope>NUCLEOTIDE SEQUENCE [MRNA]</scope>
</reference>
<reference key="3">
    <citation type="journal article" date="2005" name="Proc. Natl. Acad. Sci. U.S.A.">
        <title>Positive selection of primate TRIM5alpha identifies a critical species-specific retroviral restriction domain.</title>
        <authorList>
            <person name="Sawyer S.L."/>
            <person name="Wu L.I."/>
            <person name="Emerman M."/>
            <person name="Malik H.S."/>
        </authorList>
    </citation>
    <scope>NUCLEOTIDE SEQUENCE [GENOMIC DNA]</scope>
</reference>
<reference key="4">
    <citation type="journal article" date="2006" name="Curr. Biol.">
        <title>High-frequency persistence of an impaired allele of the retroviral defense gene TRIM5alpha in humans.</title>
        <authorList>
            <person name="Sawyer S.L."/>
            <person name="Wu L.I."/>
            <person name="Akey J.M."/>
            <person name="Emerman M."/>
            <person name="Malik H.S."/>
        </authorList>
    </citation>
    <scope>NUCLEOTIDE SEQUENCE [GENOMIC DNA]</scope>
</reference>
<reference key="5">
    <citation type="journal article" date="2006" name="Retrovirology">
        <title>Patterns of evolution of host proteins involved in retroviral pathogenesis.</title>
        <authorList>
            <person name="Ortiz M."/>
            <person name="Bleiber G."/>
            <person name="Martinez R."/>
            <person name="Kaessmann H."/>
            <person name="Telenti A."/>
        </authorList>
    </citation>
    <scope>NUCLEOTIDE SEQUENCE [GENOMIC DNA]</scope>
</reference>
<reference key="6">
    <citation type="journal article" date="2006" name="J. Virol.">
        <title>All three variable regions of the TRIM5alpha B30.2 domain can contribute to the specificity of retrovirus restriction.</title>
        <authorList>
            <person name="Ohkura S."/>
            <person name="Yap M.W."/>
            <person name="Sheldon T."/>
            <person name="Stoye J.P."/>
        </authorList>
    </citation>
    <scope>NUCLEOTIDE SEQUENCE [GENOMIC DNA] OF 300-493</scope>
</reference>